<accession>Q5PGA1</accession>
<reference key="1">
    <citation type="journal article" date="2004" name="Nat. Genet.">
        <title>Comparison of genome degradation in Paratyphi A and Typhi, human-restricted serovars of Salmonella enterica that cause typhoid.</title>
        <authorList>
            <person name="McClelland M."/>
            <person name="Sanderson K.E."/>
            <person name="Clifton S.W."/>
            <person name="Latreille P."/>
            <person name="Porwollik S."/>
            <person name="Sabo A."/>
            <person name="Meyer R."/>
            <person name="Bieri T."/>
            <person name="Ozersky P."/>
            <person name="McLellan M."/>
            <person name="Harkins C.R."/>
            <person name="Wang C."/>
            <person name="Nguyen C."/>
            <person name="Berghoff A."/>
            <person name="Elliott G."/>
            <person name="Kohlberg S."/>
            <person name="Strong C."/>
            <person name="Du F."/>
            <person name="Carter J."/>
            <person name="Kremizki C."/>
            <person name="Layman D."/>
            <person name="Leonard S."/>
            <person name="Sun H."/>
            <person name="Fulton L."/>
            <person name="Nash W."/>
            <person name="Miner T."/>
            <person name="Minx P."/>
            <person name="Delehaunty K."/>
            <person name="Fronick C."/>
            <person name="Magrini V."/>
            <person name="Nhan M."/>
            <person name="Warren W."/>
            <person name="Florea L."/>
            <person name="Spieth J."/>
            <person name="Wilson R.K."/>
        </authorList>
    </citation>
    <scope>NUCLEOTIDE SEQUENCE [LARGE SCALE GENOMIC DNA]</scope>
    <source>
        <strain>ATCC 9150 / SARB42</strain>
    </source>
</reference>
<sequence>MANITVTFTITEFCLHTGVTEEELNEIVGLGVIEPYEDDNTDWQFDDRAASVVQRALRLREELALDWPGIAVALTLLEENSRLREENRLLLQRLSRFISHP</sequence>
<evidence type="ECO:0000255" key="1">
    <source>
        <dbReference type="HAMAP-Rule" id="MF_01155"/>
    </source>
</evidence>
<name>CBPM_SALPA</name>
<gene>
    <name evidence="1" type="primary">cbpM</name>
    <name type="ordered locus">SPA1739</name>
</gene>
<comment type="function">
    <text evidence="1">Interacts with CbpA and inhibits both the DnaJ-like co-chaperone activity and the DNA binding activity of CbpA. Together with CbpA, modulates the activity of the DnaK chaperone system. Does not inhibit the co-chaperone activity of DnaJ.</text>
</comment>
<comment type="similarity">
    <text evidence="1">Belongs to the CbpM family.</text>
</comment>
<protein>
    <recommendedName>
        <fullName evidence="1">Chaperone modulatory protein CbpM</fullName>
    </recommendedName>
</protein>
<proteinExistence type="inferred from homology"/>
<organism>
    <name type="scientific">Salmonella paratyphi A (strain ATCC 9150 / SARB42)</name>
    <dbReference type="NCBI Taxonomy" id="295319"/>
    <lineage>
        <taxon>Bacteria</taxon>
        <taxon>Pseudomonadati</taxon>
        <taxon>Pseudomonadota</taxon>
        <taxon>Gammaproteobacteria</taxon>
        <taxon>Enterobacterales</taxon>
        <taxon>Enterobacteriaceae</taxon>
        <taxon>Salmonella</taxon>
    </lineage>
</organism>
<feature type="chain" id="PRO_0000286893" description="Chaperone modulatory protein CbpM">
    <location>
        <begin position="1"/>
        <end position="101"/>
    </location>
</feature>
<dbReference type="EMBL" id="CP000026">
    <property type="protein sequence ID" value="AAV77659.1"/>
    <property type="molecule type" value="Genomic_DNA"/>
</dbReference>
<dbReference type="RefSeq" id="WP_001284253.1">
    <property type="nucleotide sequence ID" value="NC_006511.1"/>
</dbReference>
<dbReference type="SMR" id="Q5PGA1"/>
<dbReference type="KEGG" id="spt:SPA1739"/>
<dbReference type="HOGENOM" id="CLU_144710_3_1_6"/>
<dbReference type="Proteomes" id="UP000008185">
    <property type="component" value="Chromosome"/>
</dbReference>
<dbReference type="Gene3D" id="1.10.1660.10">
    <property type="match status" value="1"/>
</dbReference>
<dbReference type="HAMAP" id="MF_01155">
    <property type="entry name" value="CbpM"/>
    <property type="match status" value="1"/>
</dbReference>
<dbReference type="InterPro" id="IPR022835">
    <property type="entry name" value="CbpM"/>
</dbReference>
<dbReference type="NCBIfam" id="NF007617">
    <property type="entry name" value="PRK10265.1"/>
    <property type="match status" value="1"/>
</dbReference>
<dbReference type="Pfam" id="PF13591">
    <property type="entry name" value="MerR_2"/>
    <property type="match status" value="1"/>
</dbReference>